<protein>
    <recommendedName>
        <fullName evidence="1">DNA-directed RNA polymerase subunit Rpo11</fullName>
        <ecNumber evidence="1">2.7.7.6</ecNumber>
    </recommendedName>
    <alternativeName>
        <fullName evidence="1">DNA-directed RNA polymerase subunit L</fullName>
    </alternativeName>
</protein>
<comment type="function">
    <text evidence="1">DNA-dependent RNA polymerase (RNAP) catalyzes the transcription of DNA into RNA using the four ribonucleoside triphosphates as substrates.</text>
</comment>
<comment type="catalytic activity">
    <reaction evidence="1">
        <text>RNA(n) + a ribonucleoside 5'-triphosphate = RNA(n+1) + diphosphate</text>
        <dbReference type="Rhea" id="RHEA:21248"/>
        <dbReference type="Rhea" id="RHEA-COMP:14527"/>
        <dbReference type="Rhea" id="RHEA-COMP:17342"/>
        <dbReference type="ChEBI" id="CHEBI:33019"/>
        <dbReference type="ChEBI" id="CHEBI:61557"/>
        <dbReference type="ChEBI" id="CHEBI:140395"/>
        <dbReference type="EC" id="2.7.7.6"/>
    </reaction>
</comment>
<comment type="subunit">
    <text evidence="1">Part of the RNA polymerase complex.</text>
</comment>
<comment type="subcellular location">
    <subcellularLocation>
        <location evidence="1">Cytoplasm</location>
    </subcellularLocation>
</comment>
<comment type="similarity">
    <text evidence="1">Belongs to the archaeal Rpo11/eukaryotic RPB11/RPC19 RNA polymerase subunit family.</text>
</comment>
<organism>
    <name type="scientific">Methanococcus maripaludis (strain C6 / ATCC BAA-1332)</name>
    <dbReference type="NCBI Taxonomy" id="444158"/>
    <lineage>
        <taxon>Archaea</taxon>
        <taxon>Methanobacteriati</taxon>
        <taxon>Methanobacteriota</taxon>
        <taxon>Methanomada group</taxon>
        <taxon>Methanococci</taxon>
        <taxon>Methanococcales</taxon>
        <taxon>Methanococcaceae</taxon>
        <taxon>Methanococcus</taxon>
    </lineage>
</organism>
<evidence type="ECO:0000255" key="1">
    <source>
        <dbReference type="HAMAP-Rule" id="MF_00261"/>
    </source>
</evidence>
<reference key="1">
    <citation type="submission" date="2007-10" db="EMBL/GenBank/DDBJ databases">
        <title>Complete sequence of Methanococcus maripaludis C6.</title>
        <authorList>
            <consortium name="US DOE Joint Genome Institute"/>
            <person name="Copeland A."/>
            <person name="Lucas S."/>
            <person name="Lapidus A."/>
            <person name="Barry K."/>
            <person name="Glavina del Rio T."/>
            <person name="Dalin E."/>
            <person name="Tice H."/>
            <person name="Pitluck S."/>
            <person name="Clum A."/>
            <person name="Schmutz J."/>
            <person name="Larimer F."/>
            <person name="Land M."/>
            <person name="Hauser L."/>
            <person name="Kyrpides N."/>
            <person name="Mikhailova N."/>
            <person name="Sieprawska-Lupa M."/>
            <person name="Whitman W.B."/>
            <person name="Richardson P."/>
        </authorList>
    </citation>
    <scope>NUCLEOTIDE SEQUENCE [LARGE SCALE GENOMIC DNA]</scope>
    <source>
        <strain>C6 / ATCC BAA-1332</strain>
    </source>
</reference>
<keyword id="KW-0963">Cytoplasm</keyword>
<keyword id="KW-0240">DNA-directed RNA polymerase</keyword>
<keyword id="KW-0548">Nucleotidyltransferase</keyword>
<keyword id="KW-0804">Transcription</keyword>
<keyword id="KW-0808">Transferase</keyword>
<dbReference type="EC" id="2.7.7.6" evidence="1"/>
<dbReference type="EMBL" id="CP000867">
    <property type="protein sequence ID" value="ABX01509.1"/>
    <property type="molecule type" value="Genomic_DNA"/>
</dbReference>
<dbReference type="SMR" id="A9A836"/>
<dbReference type="STRING" id="444158.MmarC6_0692"/>
<dbReference type="KEGG" id="mmx:MmarC6_0692"/>
<dbReference type="eggNOG" id="arCOG04111">
    <property type="taxonomic scope" value="Archaea"/>
</dbReference>
<dbReference type="HOGENOM" id="CLU_090381_5_0_2"/>
<dbReference type="OrthoDB" id="24205at2157"/>
<dbReference type="PhylomeDB" id="A9A836"/>
<dbReference type="GO" id="GO:0005737">
    <property type="term" value="C:cytoplasm"/>
    <property type="evidence" value="ECO:0007669"/>
    <property type="project" value="UniProtKB-SubCell"/>
</dbReference>
<dbReference type="GO" id="GO:0000428">
    <property type="term" value="C:DNA-directed RNA polymerase complex"/>
    <property type="evidence" value="ECO:0007669"/>
    <property type="project" value="UniProtKB-KW"/>
</dbReference>
<dbReference type="GO" id="GO:0003677">
    <property type="term" value="F:DNA binding"/>
    <property type="evidence" value="ECO:0007669"/>
    <property type="project" value="InterPro"/>
</dbReference>
<dbReference type="GO" id="GO:0003899">
    <property type="term" value="F:DNA-directed RNA polymerase activity"/>
    <property type="evidence" value="ECO:0007669"/>
    <property type="project" value="UniProtKB-UniRule"/>
</dbReference>
<dbReference type="GO" id="GO:0046983">
    <property type="term" value="F:protein dimerization activity"/>
    <property type="evidence" value="ECO:0007669"/>
    <property type="project" value="InterPro"/>
</dbReference>
<dbReference type="GO" id="GO:0006351">
    <property type="term" value="P:DNA-templated transcription"/>
    <property type="evidence" value="ECO:0007669"/>
    <property type="project" value="UniProtKB-UniRule"/>
</dbReference>
<dbReference type="CDD" id="cd06927">
    <property type="entry name" value="RNAP_L"/>
    <property type="match status" value="1"/>
</dbReference>
<dbReference type="Gene3D" id="3.30.1360.10">
    <property type="entry name" value="RNA polymerase, RBP11-like subunit"/>
    <property type="match status" value="1"/>
</dbReference>
<dbReference type="HAMAP" id="MF_00261">
    <property type="entry name" value="RNApol_arch_Rpo11"/>
    <property type="match status" value="1"/>
</dbReference>
<dbReference type="InterPro" id="IPR036603">
    <property type="entry name" value="RBP11-like"/>
</dbReference>
<dbReference type="InterPro" id="IPR009025">
    <property type="entry name" value="RBP11-like_dimer"/>
</dbReference>
<dbReference type="InterPro" id="IPR008193">
    <property type="entry name" value="RNA_pol_Rpb11_13-16kDa_CS"/>
</dbReference>
<dbReference type="InterPro" id="IPR022905">
    <property type="entry name" value="Rpo11-like"/>
</dbReference>
<dbReference type="NCBIfam" id="NF002234">
    <property type="entry name" value="PRK01146.1-2"/>
    <property type="match status" value="1"/>
</dbReference>
<dbReference type="Pfam" id="PF13656">
    <property type="entry name" value="RNA_pol_L_2"/>
    <property type="match status" value="1"/>
</dbReference>
<dbReference type="SUPFAM" id="SSF55257">
    <property type="entry name" value="RBP11-like subunits of RNA polymerase"/>
    <property type="match status" value="1"/>
</dbReference>
<dbReference type="PROSITE" id="PS01154">
    <property type="entry name" value="RNA_POL_L_13KD"/>
    <property type="match status" value="1"/>
</dbReference>
<name>RPO11_METM6</name>
<sequence length="96" mass="10854">MNYVNILEKSKNFIELELVNDDHSLSNLIKEVLLSKKGVILASYGVEHPVLDPDTGRYISNPRIMLKTDAKTDAEKVLKEALKDIVDLCNKTLKEL</sequence>
<gene>
    <name evidence="1" type="primary">rpo11</name>
    <name evidence="1" type="synonym">rpoL</name>
    <name type="ordered locus">MmarC6_0692</name>
</gene>
<accession>A9A836</accession>
<proteinExistence type="inferred from homology"/>
<feature type="chain" id="PRO_1000114193" description="DNA-directed RNA polymerase subunit Rpo11">
    <location>
        <begin position="1"/>
        <end position="96"/>
    </location>
</feature>